<protein>
    <recommendedName>
        <fullName evidence="1">3-isopropylmalate dehydratase small subunit</fullName>
        <ecNumber evidence="1">4.2.1.33</ecNumber>
    </recommendedName>
    <alternativeName>
        <fullName evidence="1">Alpha-IPM isomerase</fullName>
        <shortName evidence="1">IPMI</shortName>
    </alternativeName>
    <alternativeName>
        <fullName evidence="1">Isopropylmalate isomerase</fullName>
    </alternativeName>
</protein>
<evidence type="ECO:0000255" key="1">
    <source>
        <dbReference type="HAMAP-Rule" id="MF_01031"/>
    </source>
</evidence>
<sequence length="200" mass="22471">MAKFIQHIGLVAPLDAANVDTDAIIPKQFLQKVTRTGFGQHLFNDWRFLDDAGKVPNPDFVLNLPRYQGATILLARENFGCGSSREHAPWALTDFGFKVVIAPSFADIFYGNAFNNQLLPVTLSEADIDTLFQLVKENEGIEFVVDLEQQTVNAGGKSYAFEIDPFRRHCMINGLDSIGLTLQHEHNISAYEKQQPEFLR</sequence>
<reference key="1">
    <citation type="journal article" date="2010" name="J. Bacteriol.">
        <title>Genome sequence of the deep-rooted Yersinia pestis strain Angola reveals new insights into the evolution and pangenome of the plague bacterium.</title>
        <authorList>
            <person name="Eppinger M."/>
            <person name="Worsham P.L."/>
            <person name="Nikolich M.P."/>
            <person name="Riley D.R."/>
            <person name="Sebastian Y."/>
            <person name="Mou S."/>
            <person name="Achtman M."/>
            <person name="Lindler L.E."/>
            <person name="Ravel J."/>
        </authorList>
    </citation>
    <scope>NUCLEOTIDE SEQUENCE [LARGE SCALE GENOMIC DNA]</scope>
    <source>
        <strain>Angola</strain>
    </source>
</reference>
<keyword id="KW-0028">Amino-acid biosynthesis</keyword>
<keyword id="KW-0100">Branched-chain amino acid biosynthesis</keyword>
<keyword id="KW-0432">Leucine biosynthesis</keyword>
<keyword id="KW-0456">Lyase</keyword>
<gene>
    <name evidence="1" type="primary">leuD</name>
    <name type="ordered locus">YpAngola_A2939</name>
</gene>
<name>LEUD_YERPG</name>
<organism>
    <name type="scientific">Yersinia pestis bv. Antiqua (strain Angola)</name>
    <dbReference type="NCBI Taxonomy" id="349746"/>
    <lineage>
        <taxon>Bacteria</taxon>
        <taxon>Pseudomonadati</taxon>
        <taxon>Pseudomonadota</taxon>
        <taxon>Gammaproteobacteria</taxon>
        <taxon>Enterobacterales</taxon>
        <taxon>Yersiniaceae</taxon>
        <taxon>Yersinia</taxon>
    </lineage>
</organism>
<comment type="function">
    <text evidence="1">Catalyzes the isomerization between 2-isopropylmalate and 3-isopropylmalate, via the formation of 2-isopropylmaleate.</text>
</comment>
<comment type="catalytic activity">
    <reaction evidence="1">
        <text>(2R,3S)-3-isopropylmalate = (2S)-2-isopropylmalate</text>
        <dbReference type="Rhea" id="RHEA:32287"/>
        <dbReference type="ChEBI" id="CHEBI:1178"/>
        <dbReference type="ChEBI" id="CHEBI:35121"/>
        <dbReference type="EC" id="4.2.1.33"/>
    </reaction>
</comment>
<comment type="pathway">
    <text evidence="1">Amino-acid biosynthesis; L-leucine biosynthesis; L-leucine from 3-methyl-2-oxobutanoate: step 2/4.</text>
</comment>
<comment type="subunit">
    <text evidence="1">Heterodimer of LeuC and LeuD.</text>
</comment>
<comment type="similarity">
    <text evidence="1">Belongs to the LeuD family. LeuD type 1 subfamily.</text>
</comment>
<proteinExistence type="inferred from homology"/>
<feature type="chain" id="PRO_1000135843" description="3-isopropylmalate dehydratase small subunit">
    <location>
        <begin position="1"/>
        <end position="200"/>
    </location>
</feature>
<accession>A9R145</accession>
<dbReference type="EC" id="4.2.1.33" evidence="1"/>
<dbReference type="EMBL" id="CP000901">
    <property type="protein sequence ID" value="ABX87496.1"/>
    <property type="molecule type" value="Genomic_DNA"/>
</dbReference>
<dbReference type="RefSeq" id="WP_002210456.1">
    <property type="nucleotide sequence ID" value="NZ_CP009935.1"/>
</dbReference>
<dbReference type="SMR" id="A9R145"/>
<dbReference type="GeneID" id="57974082"/>
<dbReference type="KEGG" id="ypg:YpAngola_A2939"/>
<dbReference type="PATRIC" id="fig|349746.12.peg.3985"/>
<dbReference type="UniPathway" id="UPA00048">
    <property type="reaction ID" value="UER00071"/>
</dbReference>
<dbReference type="GO" id="GO:0009316">
    <property type="term" value="C:3-isopropylmalate dehydratase complex"/>
    <property type="evidence" value="ECO:0007669"/>
    <property type="project" value="InterPro"/>
</dbReference>
<dbReference type="GO" id="GO:0003861">
    <property type="term" value="F:3-isopropylmalate dehydratase activity"/>
    <property type="evidence" value="ECO:0007669"/>
    <property type="project" value="UniProtKB-UniRule"/>
</dbReference>
<dbReference type="GO" id="GO:0009098">
    <property type="term" value="P:L-leucine biosynthetic process"/>
    <property type="evidence" value="ECO:0007669"/>
    <property type="project" value="UniProtKB-UniRule"/>
</dbReference>
<dbReference type="CDD" id="cd01577">
    <property type="entry name" value="IPMI_Swivel"/>
    <property type="match status" value="1"/>
</dbReference>
<dbReference type="FunFam" id="3.20.19.10:FF:000003">
    <property type="entry name" value="3-isopropylmalate dehydratase small subunit"/>
    <property type="match status" value="1"/>
</dbReference>
<dbReference type="Gene3D" id="3.20.19.10">
    <property type="entry name" value="Aconitase, domain 4"/>
    <property type="match status" value="1"/>
</dbReference>
<dbReference type="HAMAP" id="MF_01031">
    <property type="entry name" value="LeuD_type1"/>
    <property type="match status" value="1"/>
</dbReference>
<dbReference type="InterPro" id="IPR004431">
    <property type="entry name" value="3-IsopropMal_deHydase_ssu"/>
</dbReference>
<dbReference type="InterPro" id="IPR015928">
    <property type="entry name" value="Aconitase/3IPM_dehydase_swvl"/>
</dbReference>
<dbReference type="InterPro" id="IPR000573">
    <property type="entry name" value="AconitaseA/IPMdHydase_ssu_swvl"/>
</dbReference>
<dbReference type="InterPro" id="IPR033940">
    <property type="entry name" value="IPMI_Swivel"/>
</dbReference>
<dbReference type="InterPro" id="IPR050075">
    <property type="entry name" value="LeuD"/>
</dbReference>
<dbReference type="NCBIfam" id="TIGR00171">
    <property type="entry name" value="leuD"/>
    <property type="match status" value="1"/>
</dbReference>
<dbReference type="NCBIfam" id="NF002458">
    <property type="entry name" value="PRK01641.1"/>
    <property type="match status" value="1"/>
</dbReference>
<dbReference type="PANTHER" id="PTHR43345:SF5">
    <property type="entry name" value="3-ISOPROPYLMALATE DEHYDRATASE SMALL SUBUNIT"/>
    <property type="match status" value="1"/>
</dbReference>
<dbReference type="PANTHER" id="PTHR43345">
    <property type="entry name" value="3-ISOPROPYLMALATE DEHYDRATASE SMALL SUBUNIT 2-RELATED-RELATED"/>
    <property type="match status" value="1"/>
</dbReference>
<dbReference type="Pfam" id="PF00694">
    <property type="entry name" value="Aconitase_C"/>
    <property type="match status" value="1"/>
</dbReference>
<dbReference type="SUPFAM" id="SSF52016">
    <property type="entry name" value="LeuD/IlvD-like"/>
    <property type="match status" value="1"/>
</dbReference>